<organism>
    <name type="scientific">Prochlorococcus marinus (strain MIT 9313)</name>
    <dbReference type="NCBI Taxonomy" id="74547"/>
    <lineage>
        <taxon>Bacteria</taxon>
        <taxon>Bacillati</taxon>
        <taxon>Cyanobacteriota</taxon>
        <taxon>Cyanophyceae</taxon>
        <taxon>Synechococcales</taxon>
        <taxon>Prochlorococcaceae</taxon>
        <taxon>Prochlorococcus</taxon>
    </lineage>
</organism>
<reference key="1">
    <citation type="journal article" date="2003" name="Nature">
        <title>Genome divergence in two Prochlorococcus ecotypes reflects oceanic niche differentiation.</title>
        <authorList>
            <person name="Rocap G."/>
            <person name="Larimer F.W."/>
            <person name="Lamerdin J.E."/>
            <person name="Malfatti S."/>
            <person name="Chain P."/>
            <person name="Ahlgren N.A."/>
            <person name="Arellano A."/>
            <person name="Coleman M."/>
            <person name="Hauser L."/>
            <person name="Hess W.R."/>
            <person name="Johnson Z.I."/>
            <person name="Land M.L."/>
            <person name="Lindell D."/>
            <person name="Post A.F."/>
            <person name="Regala W."/>
            <person name="Shah M."/>
            <person name="Shaw S.L."/>
            <person name="Steglich C."/>
            <person name="Sullivan M.B."/>
            <person name="Ting C.S."/>
            <person name="Tolonen A."/>
            <person name="Webb E.A."/>
            <person name="Zinser E.R."/>
            <person name="Chisholm S.W."/>
        </authorList>
    </citation>
    <scope>NUCLEOTIDE SEQUENCE [LARGE SCALE GENOMIC DNA]</scope>
    <source>
        <strain>MIT 9313</strain>
    </source>
</reference>
<name>MURD_PROMM</name>
<gene>
    <name evidence="1" type="primary">murD</name>
    <name type="ordered locus">PMT_1434</name>
</gene>
<comment type="function">
    <text evidence="1">Cell wall formation. Catalyzes the addition of glutamate to the nucleotide precursor UDP-N-acetylmuramoyl-L-alanine (UMA).</text>
</comment>
<comment type="catalytic activity">
    <reaction evidence="1">
        <text>UDP-N-acetyl-alpha-D-muramoyl-L-alanine + D-glutamate + ATP = UDP-N-acetyl-alpha-D-muramoyl-L-alanyl-D-glutamate + ADP + phosphate + H(+)</text>
        <dbReference type="Rhea" id="RHEA:16429"/>
        <dbReference type="ChEBI" id="CHEBI:15378"/>
        <dbReference type="ChEBI" id="CHEBI:29986"/>
        <dbReference type="ChEBI" id="CHEBI:30616"/>
        <dbReference type="ChEBI" id="CHEBI:43474"/>
        <dbReference type="ChEBI" id="CHEBI:83898"/>
        <dbReference type="ChEBI" id="CHEBI:83900"/>
        <dbReference type="ChEBI" id="CHEBI:456216"/>
        <dbReference type="EC" id="6.3.2.9"/>
    </reaction>
</comment>
<comment type="pathway">
    <text evidence="1">Cell wall biogenesis; peptidoglycan biosynthesis.</text>
</comment>
<comment type="subcellular location">
    <subcellularLocation>
        <location evidence="1">Cytoplasm</location>
    </subcellularLocation>
</comment>
<comment type="similarity">
    <text evidence="1">Belongs to the MurCDEF family.</text>
</comment>
<sequence>MARTVVVGLGRSGIGAARLLQAEGHQVTVLERSIEPHLQSLAADLRLQGIAVELGKPLELNSFIPLLDQLDAVVISPGIAWDHPTLTALRQRGIDIDGEMAVAWRSLSHLPWIAITGTNGKTTVTHLLNHVLESNGLRAPMGGNVGHAAAEVALKWRQPNAQRPDWLVMELSSYQIEAAPEIAPRMGIWTNLTPDHLERHGTLDAYRTIKRGLLERSEIRIFNGDDPDLRSQRSSWDKGLWVSSEGPGTANHRADFWIDAEGLVREPQGALFAASALAMPGQHNLQNLLLVTAAARQTGLPAKAIEASLRSFPGVPHRLEQLGHIQQMSVYNDSKATNYDAACVGLKAVPPPAVVLAGGQTKQGDASGWLKQLDQNACAVILFGAGASELQELIKTSGFSGELHCCSNLNAAVTLAIPLGVERQAACLLLSPACASFDQYQDFEARGEHFRSLISSHLTA</sequence>
<keyword id="KW-0067">ATP-binding</keyword>
<keyword id="KW-0131">Cell cycle</keyword>
<keyword id="KW-0132">Cell division</keyword>
<keyword id="KW-0133">Cell shape</keyword>
<keyword id="KW-0961">Cell wall biogenesis/degradation</keyword>
<keyword id="KW-0963">Cytoplasm</keyword>
<keyword id="KW-0436">Ligase</keyword>
<keyword id="KW-0547">Nucleotide-binding</keyword>
<keyword id="KW-0573">Peptidoglycan synthesis</keyword>
<keyword id="KW-1185">Reference proteome</keyword>
<protein>
    <recommendedName>
        <fullName evidence="1">UDP-N-acetylmuramoylalanine--D-glutamate ligase</fullName>
        <ecNumber evidence="1">6.3.2.9</ecNumber>
    </recommendedName>
    <alternativeName>
        <fullName evidence="1">D-glutamic acid-adding enzyme</fullName>
    </alternativeName>
    <alternativeName>
        <fullName evidence="1">UDP-N-acetylmuramoyl-L-alanyl-D-glutamate synthetase</fullName>
    </alternativeName>
</protein>
<proteinExistence type="inferred from homology"/>
<accession>Q7V5V5</accession>
<evidence type="ECO:0000255" key="1">
    <source>
        <dbReference type="HAMAP-Rule" id="MF_00639"/>
    </source>
</evidence>
<feature type="chain" id="PRO_0000109059" description="UDP-N-acetylmuramoylalanine--D-glutamate ligase">
    <location>
        <begin position="1"/>
        <end position="460"/>
    </location>
</feature>
<feature type="binding site" evidence="1">
    <location>
        <begin position="117"/>
        <end position="123"/>
    </location>
    <ligand>
        <name>ATP</name>
        <dbReference type="ChEBI" id="CHEBI:30616"/>
    </ligand>
</feature>
<dbReference type="EC" id="6.3.2.9" evidence="1"/>
<dbReference type="EMBL" id="BX548175">
    <property type="protein sequence ID" value="CAE21609.1"/>
    <property type="molecule type" value="Genomic_DNA"/>
</dbReference>
<dbReference type="RefSeq" id="WP_011130802.1">
    <property type="nucleotide sequence ID" value="NC_005071.1"/>
</dbReference>
<dbReference type="SMR" id="Q7V5V5"/>
<dbReference type="DNASU" id="1729414"/>
<dbReference type="KEGG" id="pmt:PMT_1434"/>
<dbReference type="eggNOG" id="COG0771">
    <property type="taxonomic scope" value="Bacteria"/>
</dbReference>
<dbReference type="HOGENOM" id="CLU_032540_0_0_3"/>
<dbReference type="OrthoDB" id="9809796at2"/>
<dbReference type="UniPathway" id="UPA00219"/>
<dbReference type="Proteomes" id="UP000001423">
    <property type="component" value="Chromosome"/>
</dbReference>
<dbReference type="GO" id="GO:0005737">
    <property type="term" value="C:cytoplasm"/>
    <property type="evidence" value="ECO:0007669"/>
    <property type="project" value="UniProtKB-SubCell"/>
</dbReference>
<dbReference type="GO" id="GO:0005524">
    <property type="term" value="F:ATP binding"/>
    <property type="evidence" value="ECO:0007669"/>
    <property type="project" value="UniProtKB-UniRule"/>
</dbReference>
<dbReference type="GO" id="GO:0004326">
    <property type="term" value="F:tetrahydrofolylpolyglutamate synthase activity"/>
    <property type="evidence" value="ECO:0007669"/>
    <property type="project" value="InterPro"/>
</dbReference>
<dbReference type="GO" id="GO:0008764">
    <property type="term" value="F:UDP-N-acetylmuramoylalanine-D-glutamate ligase activity"/>
    <property type="evidence" value="ECO:0007669"/>
    <property type="project" value="UniProtKB-UniRule"/>
</dbReference>
<dbReference type="GO" id="GO:0051301">
    <property type="term" value="P:cell division"/>
    <property type="evidence" value="ECO:0007669"/>
    <property type="project" value="UniProtKB-KW"/>
</dbReference>
<dbReference type="GO" id="GO:0071555">
    <property type="term" value="P:cell wall organization"/>
    <property type="evidence" value="ECO:0007669"/>
    <property type="project" value="UniProtKB-KW"/>
</dbReference>
<dbReference type="GO" id="GO:0009252">
    <property type="term" value="P:peptidoglycan biosynthetic process"/>
    <property type="evidence" value="ECO:0007669"/>
    <property type="project" value="UniProtKB-UniRule"/>
</dbReference>
<dbReference type="GO" id="GO:0008360">
    <property type="term" value="P:regulation of cell shape"/>
    <property type="evidence" value="ECO:0007669"/>
    <property type="project" value="UniProtKB-KW"/>
</dbReference>
<dbReference type="Gene3D" id="3.90.190.20">
    <property type="entry name" value="Mur ligase, C-terminal domain"/>
    <property type="match status" value="1"/>
</dbReference>
<dbReference type="Gene3D" id="3.40.1190.10">
    <property type="entry name" value="Mur-like, catalytic domain"/>
    <property type="match status" value="1"/>
</dbReference>
<dbReference type="Gene3D" id="3.40.50.720">
    <property type="entry name" value="NAD(P)-binding Rossmann-like Domain"/>
    <property type="match status" value="1"/>
</dbReference>
<dbReference type="HAMAP" id="MF_00639">
    <property type="entry name" value="MurD"/>
    <property type="match status" value="1"/>
</dbReference>
<dbReference type="InterPro" id="IPR018109">
    <property type="entry name" value="Folylpolyglutamate_synth_CS"/>
</dbReference>
<dbReference type="InterPro" id="IPR036565">
    <property type="entry name" value="Mur-like_cat_sf"/>
</dbReference>
<dbReference type="InterPro" id="IPR036615">
    <property type="entry name" value="Mur_ligase_C_dom_sf"/>
</dbReference>
<dbReference type="InterPro" id="IPR013221">
    <property type="entry name" value="Mur_ligase_cen"/>
</dbReference>
<dbReference type="InterPro" id="IPR005762">
    <property type="entry name" value="MurD"/>
</dbReference>
<dbReference type="NCBIfam" id="TIGR01087">
    <property type="entry name" value="murD"/>
    <property type="match status" value="1"/>
</dbReference>
<dbReference type="PANTHER" id="PTHR43692">
    <property type="entry name" value="UDP-N-ACETYLMURAMOYLALANINE--D-GLUTAMATE LIGASE"/>
    <property type="match status" value="1"/>
</dbReference>
<dbReference type="PANTHER" id="PTHR43692:SF1">
    <property type="entry name" value="UDP-N-ACETYLMURAMOYLALANINE--D-GLUTAMATE LIGASE"/>
    <property type="match status" value="1"/>
</dbReference>
<dbReference type="Pfam" id="PF08245">
    <property type="entry name" value="Mur_ligase_M"/>
    <property type="match status" value="1"/>
</dbReference>
<dbReference type="Pfam" id="PF21799">
    <property type="entry name" value="MurD-like_N"/>
    <property type="match status" value="1"/>
</dbReference>
<dbReference type="SUPFAM" id="SSF51984">
    <property type="entry name" value="MurCD N-terminal domain"/>
    <property type="match status" value="1"/>
</dbReference>
<dbReference type="SUPFAM" id="SSF53623">
    <property type="entry name" value="MurD-like peptide ligases, catalytic domain"/>
    <property type="match status" value="1"/>
</dbReference>
<dbReference type="SUPFAM" id="SSF53244">
    <property type="entry name" value="MurD-like peptide ligases, peptide-binding domain"/>
    <property type="match status" value="1"/>
</dbReference>